<comment type="function">
    <text evidence="2">GTP hydrolase that promotes the GTP-dependent binding of aminoacyl-tRNA to the A-site of ribosomes during protein biosynthesis.</text>
</comment>
<comment type="catalytic activity">
    <reaction evidence="1">
        <text>GTP + H2O = GDP + phosphate + H(+)</text>
        <dbReference type="Rhea" id="RHEA:19669"/>
        <dbReference type="ChEBI" id="CHEBI:15377"/>
        <dbReference type="ChEBI" id="CHEBI:15378"/>
        <dbReference type="ChEBI" id="CHEBI:37565"/>
        <dbReference type="ChEBI" id="CHEBI:43474"/>
        <dbReference type="ChEBI" id="CHEBI:58189"/>
        <dbReference type="EC" id="3.6.5.3"/>
    </reaction>
    <physiologicalReaction direction="left-to-right" evidence="1">
        <dbReference type="Rhea" id="RHEA:19670"/>
    </physiologicalReaction>
</comment>
<comment type="subcellular location">
    <subcellularLocation>
        <location evidence="2">Mitochondrion</location>
    </subcellularLocation>
</comment>
<comment type="similarity">
    <text evidence="4">Belongs to the GTP-binding elongation factor family. EF-Tu/EF-1A subfamily.</text>
</comment>
<accession>P86251</accession>
<gene>
    <name evidence="2" type="primary">TUFM</name>
</gene>
<name>EFTU_MESAU</name>
<dbReference type="EC" id="3.6.5.3" evidence="1"/>
<dbReference type="SMR" id="P86251"/>
<dbReference type="Proteomes" id="UP000189706">
    <property type="component" value="Unplaced"/>
</dbReference>
<dbReference type="GO" id="GO:0005739">
    <property type="term" value="C:mitochondrion"/>
    <property type="evidence" value="ECO:0007669"/>
    <property type="project" value="UniProtKB-SubCell"/>
</dbReference>
<dbReference type="GO" id="GO:0005525">
    <property type="term" value="F:GTP binding"/>
    <property type="evidence" value="ECO:0000250"/>
    <property type="project" value="UniProtKB"/>
</dbReference>
<dbReference type="GO" id="GO:0003924">
    <property type="term" value="F:GTPase activity"/>
    <property type="evidence" value="ECO:0000250"/>
    <property type="project" value="UniProtKB"/>
</dbReference>
<dbReference type="GO" id="GO:0000287">
    <property type="term" value="F:magnesium ion binding"/>
    <property type="evidence" value="ECO:0000250"/>
    <property type="project" value="UniProtKB"/>
</dbReference>
<dbReference type="GO" id="GO:0003746">
    <property type="term" value="F:translation elongation factor activity"/>
    <property type="evidence" value="ECO:0007669"/>
    <property type="project" value="UniProtKB-KW"/>
</dbReference>
<dbReference type="GO" id="GO:0070125">
    <property type="term" value="P:mitochondrial translational elongation"/>
    <property type="evidence" value="ECO:0007669"/>
    <property type="project" value="TreeGrafter"/>
</dbReference>
<dbReference type="Gene3D" id="3.40.50.300">
    <property type="entry name" value="P-loop containing nucleotide triphosphate hydrolases"/>
    <property type="match status" value="1"/>
</dbReference>
<dbReference type="Gene3D" id="2.40.30.10">
    <property type="entry name" value="Translation factors"/>
    <property type="match status" value="1"/>
</dbReference>
<dbReference type="InterPro" id="IPR050055">
    <property type="entry name" value="EF-Tu_GTPase"/>
</dbReference>
<dbReference type="InterPro" id="IPR031157">
    <property type="entry name" value="G_TR_CS"/>
</dbReference>
<dbReference type="InterPro" id="IPR027417">
    <property type="entry name" value="P-loop_NTPase"/>
</dbReference>
<dbReference type="InterPro" id="IPR000795">
    <property type="entry name" value="T_Tr_GTP-bd_dom"/>
</dbReference>
<dbReference type="InterPro" id="IPR009000">
    <property type="entry name" value="Transl_B-barrel_sf"/>
</dbReference>
<dbReference type="PANTHER" id="PTHR43721:SF36">
    <property type="entry name" value="ELONGATION FACTOR TU, MITOCHONDRIAL"/>
    <property type="match status" value="1"/>
</dbReference>
<dbReference type="PANTHER" id="PTHR43721">
    <property type="entry name" value="ELONGATION FACTOR TU-RELATED"/>
    <property type="match status" value="1"/>
</dbReference>
<dbReference type="Pfam" id="PF00009">
    <property type="entry name" value="GTP_EFTU"/>
    <property type="match status" value="1"/>
</dbReference>
<dbReference type="PRINTS" id="PR00315">
    <property type="entry name" value="ELONGATNFCT"/>
</dbReference>
<dbReference type="SUPFAM" id="SSF52540">
    <property type="entry name" value="P-loop containing nucleoside triphosphate hydrolases"/>
    <property type="match status" value="1"/>
</dbReference>
<dbReference type="SUPFAM" id="SSF50447">
    <property type="entry name" value="Translation proteins"/>
    <property type="match status" value="1"/>
</dbReference>
<dbReference type="PROSITE" id="PS00301">
    <property type="entry name" value="G_TR_1"/>
    <property type="match status" value="1"/>
</dbReference>
<evidence type="ECO:0000250" key="1">
    <source>
        <dbReference type="UniProtKB" id="P0CE47"/>
    </source>
</evidence>
<evidence type="ECO:0000250" key="2">
    <source>
        <dbReference type="UniProtKB" id="P49411"/>
    </source>
</evidence>
<evidence type="ECO:0000250" key="3">
    <source>
        <dbReference type="UniProtKB" id="Q8BFR5"/>
    </source>
</evidence>
<evidence type="ECO:0000255" key="4"/>
<evidence type="ECO:0000305" key="5"/>
<keyword id="KW-0007">Acetylation</keyword>
<keyword id="KW-0251">Elongation factor</keyword>
<keyword id="KW-0342">GTP-binding</keyword>
<keyword id="KW-0378">Hydrolase</keyword>
<keyword id="KW-0460">Magnesium</keyword>
<keyword id="KW-0479">Metal-binding</keyword>
<keyword id="KW-0496">Mitochondrion</keyword>
<keyword id="KW-0547">Nucleotide-binding</keyword>
<keyword id="KW-0597">Phosphoprotein</keyword>
<keyword id="KW-0648">Protein biosynthesis</keyword>
<keyword id="KW-1185">Reference proteome</keyword>
<feature type="chain" id="PRO_0000394413" description="Elongation factor Tu, mitochondrial">
    <location>
        <begin position="1" status="less than"/>
        <end position="174" status="greater than"/>
    </location>
</feature>
<feature type="binding site" evidence="2">
    <location>
        <begin position="62"/>
        <end position="66"/>
    </location>
    <ligand>
        <name>GTP</name>
        <dbReference type="ChEBI" id="CHEBI:37565"/>
    </ligand>
</feature>
<feature type="modified residue" description="N6-succinyllysine" evidence="3">
    <location>
        <position position="78"/>
    </location>
</feature>
<feature type="modified residue" description="Phosphothreonine" evidence="2">
    <location>
        <position position="103"/>
    </location>
</feature>
<feature type="modified residue" description="Phosphoserine" evidence="3">
    <location>
        <position position="121"/>
    </location>
</feature>
<feature type="modified residue" description="N6-acetyllysine" evidence="3">
    <location>
        <position position="161"/>
    </location>
</feature>
<feature type="non-consecutive residues" evidence="5">
    <location>
        <begin position="17"/>
        <end position="18"/>
    </location>
</feature>
<feature type="non-consecutive residues" evidence="5">
    <location>
        <begin position="26"/>
        <end position="27"/>
    </location>
</feature>
<feature type="non-consecutive residues" evidence="5">
    <location>
        <begin position="71"/>
        <end position="72"/>
    </location>
</feature>
<feature type="non-consecutive residues" evidence="5">
    <location>
        <begin position="96"/>
        <end position="97"/>
    </location>
</feature>
<feature type="non-consecutive residues" evidence="5">
    <location>
        <begin position="106"/>
        <end position="107"/>
    </location>
</feature>
<feature type="non-consecutive residues" evidence="5">
    <location>
        <begin position="120"/>
        <end position="121"/>
    </location>
</feature>
<feature type="non-consecutive residues" evidence="5">
    <location>
        <begin position="136"/>
        <end position="137"/>
    </location>
</feature>
<feature type="non-consecutive residues" evidence="5">
    <location>
        <begin position="166"/>
        <end position="167"/>
    </location>
</feature>
<feature type="non-terminal residue">
    <location>
        <position position="1"/>
    </location>
</feature>
<feature type="non-terminal residue">
    <location>
        <position position="174"/>
    </location>
</feature>
<reference key="1">
    <citation type="journal article" date="2010" name="Asian J. Androl.">
        <title>Glucose-regulated protein precursor (GRP78) and tumor rejection antigen (GP96) are unique to hamster caput epididymal spermatozoa.</title>
        <authorList>
            <person name="Kameshwari D.B."/>
            <person name="Bhande S."/>
            <person name="Sundaram C.S."/>
            <person name="Kota V."/>
            <person name="Siva A.B."/>
            <person name="Shivaji S."/>
        </authorList>
    </citation>
    <scope>IDENTIFICATION BY MASS SPECTROMETRY</scope>
</reference>
<protein>
    <recommendedName>
        <fullName>Elongation factor Tu, mitochondrial</fullName>
        <shortName>EF-Tu</shortName>
        <ecNumber evidence="1">3.6.5.3</ecNumber>
    </recommendedName>
</protein>
<organism>
    <name type="scientific">Mesocricetus auratus</name>
    <name type="common">Golden hamster</name>
    <dbReference type="NCBI Taxonomy" id="10036"/>
    <lineage>
        <taxon>Eukaryota</taxon>
        <taxon>Metazoa</taxon>
        <taxon>Chordata</taxon>
        <taxon>Craniata</taxon>
        <taxon>Vertebrata</taxon>
        <taxon>Euteleostomi</taxon>
        <taxon>Mammalia</taxon>
        <taxon>Eutheria</taxon>
        <taxon>Euarchontoglires</taxon>
        <taxon>Glires</taxon>
        <taxon>Rodentia</taxon>
        <taxon>Myomorpha</taxon>
        <taxon>Muroidea</taxon>
        <taxon>Cricetidae</taxon>
        <taxon>Cricetinae</taxon>
        <taxon>Mesocricetus</taxon>
    </lineage>
</organism>
<proteinExistence type="evidence at protein level"/>
<sequence>DKPHVNVGTIGHVDHGKILAEGGGAKKYEEIDNAPEERARGITINAAHVEYSTAARHYAHTDCPGHADYVKDPELGVKSVQKLLDAVDTYIPVPTRGTVVTGTLERGDECELLGHNKNIRSLERAEAGDNLGALVRGLVMVKPGSIQPHQKVEAQVYILSKEEGGRFTLRDGNK</sequence>